<gene>
    <name type="ordered locus">Sputw3181_3285</name>
</gene>
<comment type="function">
    <text evidence="1">Specifically methylates the adenine in position 37 of tRNA(1)(Val) (anticodon cmo5UAC).</text>
</comment>
<comment type="catalytic activity">
    <reaction evidence="1">
        <text>adenosine(37) in tRNA1(Val) + S-adenosyl-L-methionine = N(6)-methyladenosine(37) in tRNA1(Val) + S-adenosyl-L-homocysteine + H(+)</text>
        <dbReference type="Rhea" id="RHEA:43160"/>
        <dbReference type="Rhea" id="RHEA-COMP:10369"/>
        <dbReference type="Rhea" id="RHEA-COMP:10370"/>
        <dbReference type="ChEBI" id="CHEBI:15378"/>
        <dbReference type="ChEBI" id="CHEBI:57856"/>
        <dbReference type="ChEBI" id="CHEBI:59789"/>
        <dbReference type="ChEBI" id="CHEBI:74411"/>
        <dbReference type="ChEBI" id="CHEBI:74449"/>
        <dbReference type="EC" id="2.1.1.223"/>
    </reaction>
</comment>
<comment type="subcellular location">
    <subcellularLocation>
        <location evidence="1">Cytoplasm</location>
    </subcellularLocation>
</comment>
<comment type="similarity">
    <text evidence="1">Belongs to the methyltransferase superfamily. tRNA (adenine-N(6)-)-methyltransferase family.</text>
</comment>
<proteinExistence type="inferred from homology"/>
<protein>
    <recommendedName>
        <fullName evidence="1">tRNA1(Val) (adenine(37)-N6)-methyltransferase</fullName>
        <ecNumber evidence="1">2.1.1.223</ecNumber>
    </recommendedName>
    <alternativeName>
        <fullName evidence="1">tRNA m6A37 methyltransferase</fullName>
    </alternativeName>
</protein>
<name>TRMN6_SHESW</name>
<organism>
    <name type="scientific">Shewanella sp. (strain W3-18-1)</name>
    <dbReference type="NCBI Taxonomy" id="351745"/>
    <lineage>
        <taxon>Bacteria</taxon>
        <taxon>Pseudomonadati</taxon>
        <taxon>Pseudomonadota</taxon>
        <taxon>Gammaproteobacteria</taxon>
        <taxon>Alteromonadales</taxon>
        <taxon>Shewanellaceae</taxon>
        <taxon>Shewanella</taxon>
    </lineage>
</organism>
<feature type="chain" id="PRO_0000387431" description="tRNA1(Val) (adenine(37)-N6)-methyltransferase">
    <location>
        <begin position="1"/>
        <end position="238"/>
    </location>
</feature>
<accession>A1RN54</accession>
<keyword id="KW-0963">Cytoplasm</keyword>
<keyword id="KW-0489">Methyltransferase</keyword>
<keyword id="KW-0949">S-adenosyl-L-methionine</keyword>
<keyword id="KW-0808">Transferase</keyword>
<keyword id="KW-0819">tRNA processing</keyword>
<reference key="1">
    <citation type="submission" date="2006-12" db="EMBL/GenBank/DDBJ databases">
        <title>Complete sequence of Shewanella sp. W3-18-1.</title>
        <authorList>
            <consortium name="US DOE Joint Genome Institute"/>
            <person name="Copeland A."/>
            <person name="Lucas S."/>
            <person name="Lapidus A."/>
            <person name="Barry K."/>
            <person name="Detter J.C."/>
            <person name="Glavina del Rio T."/>
            <person name="Hammon N."/>
            <person name="Israni S."/>
            <person name="Dalin E."/>
            <person name="Tice H."/>
            <person name="Pitluck S."/>
            <person name="Chain P."/>
            <person name="Malfatti S."/>
            <person name="Shin M."/>
            <person name="Vergez L."/>
            <person name="Schmutz J."/>
            <person name="Larimer F."/>
            <person name="Land M."/>
            <person name="Hauser L."/>
            <person name="Kyrpides N."/>
            <person name="Lykidis A."/>
            <person name="Tiedje J."/>
            <person name="Richardson P."/>
        </authorList>
    </citation>
    <scope>NUCLEOTIDE SEQUENCE [LARGE SCALE GENOMIC DNA]</scope>
    <source>
        <strain>W3-18-1</strain>
    </source>
</reference>
<sequence>MAFTFKQFHIDDLNCGMAVSTDAVVLGAWAPLTNAKQILDIGAGSGILGLMAAQRSQANITCIELDDTAAIACQHNIAQSPWASRIRLVQGSIQQLSQAEEYQGYFDHIICNPPYFEHGPQAQLSQRAMARHTDQLSFNELLAAIEQCLSPNGLASLILPIQSLHNFNHLLSQSRLEWVERVDIKSVEGKRANRVLCLLTAQTHRTVEPKVSELTLRDTSGQYSQAMVHLTQDFYLKL</sequence>
<evidence type="ECO:0000255" key="1">
    <source>
        <dbReference type="HAMAP-Rule" id="MF_01872"/>
    </source>
</evidence>
<dbReference type="EC" id="2.1.1.223" evidence="1"/>
<dbReference type="EMBL" id="CP000503">
    <property type="protein sequence ID" value="ABM26099.1"/>
    <property type="molecule type" value="Genomic_DNA"/>
</dbReference>
<dbReference type="RefSeq" id="WP_011790547.1">
    <property type="nucleotide sequence ID" value="NC_008750.1"/>
</dbReference>
<dbReference type="SMR" id="A1RN54"/>
<dbReference type="KEGG" id="shw:Sputw3181_3285"/>
<dbReference type="HOGENOM" id="CLU_061983_0_0_6"/>
<dbReference type="Proteomes" id="UP000002597">
    <property type="component" value="Chromosome"/>
</dbReference>
<dbReference type="GO" id="GO:0005737">
    <property type="term" value="C:cytoplasm"/>
    <property type="evidence" value="ECO:0007669"/>
    <property type="project" value="UniProtKB-SubCell"/>
</dbReference>
<dbReference type="GO" id="GO:0003676">
    <property type="term" value="F:nucleic acid binding"/>
    <property type="evidence" value="ECO:0007669"/>
    <property type="project" value="InterPro"/>
</dbReference>
<dbReference type="GO" id="GO:0016430">
    <property type="term" value="F:tRNA (adenine-N6)-methyltransferase activity"/>
    <property type="evidence" value="ECO:0007669"/>
    <property type="project" value="UniProtKB-UniRule"/>
</dbReference>
<dbReference type="GO" id="GO:0032259">
    <property type="term" value="P:methylation"/>
    <property type="evidence" value="ECO:0007669"/>
    <property type="project" value="UniProtKB-KW"/>
</dbReference>
<dbReference type="GO" id="GO:0008033">
    <property type="term" value="P:tRNA processing"/>
    <property type="evidence" value="ECO:0007669"/>
    <property type="project" value="UniProtKB-UniRule"/>
</dbReference>
<dbReference type="CDD" id="cd02440">
    <property type="entry name" value="AdoMet_MTases"/>
    <property type="match status" value="1"/>
</dbReference>
<dbReference type="Gene3D" id="3.40.50.150">
    <property type="entry name" value="Vaccinia Virus protein VP39"/>
    <property type="match status" value="1"/>
</dbReference>
<dbReference type="HAMAP" id="MF_01872">
    <property type="entry name" value="tRNA_methyltr_YfiC"/>
    <property type="match status" value="1"/>
</dbReference>
<dbReference type="InterPro" id="IPR002052">
    <property type="entry name" value="DNA_methylase_N6_adenine_CS"/>
</dbReference>
<dbReference type="InterPro" id="IPR029063">
    <property type="entry name" value="SAM-dependent_MTases_sf"/>
</dbReference>
<dbReference type="InterPro" id="IPR007848">
    <property type="entry name" value="Small_mtfrase_dom"/>
</dbReference>
<dbReference type="InterPro" id="IPR050210">
    <property type="entry name" value="tRNA_Adenine-N(6)_MTase"/>
</dbReference>
<dbReference type="InterPro" id="IPR022882">
    <property type="entry name" value="tRNA_adenine-N6_MeTrfase"/>
</dbReference>
<dbReference type="PANTHER" id="PTHR47739">
    <property type="entry name" value="TRNA1(VAL) (ADENINE(37)-N6)-METHYLTRANSFERASE"/>
    <property type="match status" value="1"/>
</dbReference>
<dbReference type="PANTHER" id="PTHR47739:SF1">
    <property type="entry name" value="TRNA1(VAL) (ADENINE(37)-N6)-METHYLTRANSFERASE"/>
    <property type="match status" value="1"/>
</dbReference>
<dbReference type="Pfam" id="PF05175">
    <property type="entry name" value="MTS"/>
    <property type="match status" value="1"/>
</dbReference>
<dbReference type="SUPFAM" id="SSF53335">
    <property type="entry name" value="S-adenosyl-L-methionine-dependent methyltransferases"/>
    <property type="match status" value="1"/>
</dbReference>
<dbReference type="PROSITE" id="PS00092">
    <property type="entry name" value="N6_MTASE"/>
    <property type="match status" value="1"/>
</dbReference>